<dbReference type="EMBL" id="BA000045">
    <property type="protein sequence ID" value="BAC88308.1"/>
    <property type="molecule type" value="Genomic_DNA"/>
</dbReference>
<dbReference type="RefSeq" id="NP_923313.1">
    <property type="nucleotide sequence ID" value="NC_005125.1"/>
</dbReference>
<dbReference type="RefSeq" id="WP_011140371.1">
    <property type="nucleotide sequence ID" value="NC_005125.1"/>
</dbReference>
<dbReference type="SMR" id="Q7NNP3"/>
<dbReference type="STRING" id="251221.gene:10757839"/>
<dbReference type="EnsemblBacteria" id="BAC88308">
    <property type="protein sequence ID" value="BAC88308"/>
    <property type="gene ID" value="BAC88308"/>
</dbReference>
<dbReference type="KEGG" id="gvi:gll0367"/>
<dbReference type="PATRIC" id="fig|251221.4.peg.374"/>
<dbReference type="eggNOG" id="COG0580">
    <property type="taxonomic scope" value="Bacteria"/>
</dbReference>
<dbReference type="HOGENOM" id="CLU_020019_3_2_3"/>
<dbReference type="InParanoid" id="Q7NNP3"/>
<dbReference type="OrthoDB" id="9807293at2"/>
<dbReference type="PhylomeDB" id="Q7NNP3"/>
<dbReference type="Proteomes" id="UP000000557">
    <property type="component" value="Chromosome"/>
</dbReference>
<dbReference type="GO" id="GO:0005886">
    <property type="term" value="C:plasma membrane"/>
    <property type="evidence" value="ECO:0000318"/>
    <property type="project" value="GO_Central"/>
</dbReference>
<dbReference type="GO" id="GO:0015250">
    <property type="term" value="F:water channel activity"/>
    <property type="evidence" value="ECO:0000318"/>
    <property type="project" value="GO_Central"/>
</dbReference>
<dbReference type="GO" id="GO:0006833">
    <property type="term" value="P:water transport"/>
    <property type="evidence" value="ECO:0000318"/>
    <property type="project" value="GO_Central"/>
</dbReference>
<dbReference type="CDD" id="cd00333">
    <property type="entry name" value="MIP"/>
    <property type="match status" value="1"/>
</dbReference>
<dbReference type="FunFam" id="1.20.1080.10:FF:000007">
    <property type="entry name" value="Aquaporin Z"/>
    <property type="match status" value="1"/>
</dbReference>
<dbReference type="Gene3D" id="1.20.1080.10">
    <property type="entry name" value="Glycerol uptake facilitator protein"/>
    <property type="match status" value="1"/>
</dbReference>
<dbReference type="HAMAP" id="MF_01146">
    <property type="entry name" value="Aquaporin_Z"/>
    <property type="match status" value="1"/>
</dbReference>
<dbReference type="InterPro" id="IPR023271">
    <property type="entry name" value="Aquaporin-like"/>
</dbReference>
<dbReference type="InterPro" id="IPR034294">
    <property type="entry name" value="Aquaporin_transptr"/>
</dbReference>
<dbReference type="InterPro" id="IPR023743">
    <property type="entry name" value="Aquaporin_Z"/>
</dbReference>
<dbReference type="InterPro" id="IPR000425">
    <property type="entry name" value="MIP"/>
</dbReference>
<dbReference type="InterPro" id="IPR022357">
    <property type="entry name" value="MIP_CS"/>
</dbReference>
<dbReference type="NCBIfam" id="TIGR00861">
    <property type="entry name" value="MIP"/>
    <property type="match status" value="1"/>
</dbReference>
<dbReference type="NCBIfam" id="NF003838">
    <property type="entry name" value="PRK05420.1"/>
    <property type="match status" value="1"/>
</dbReference>
<dbReference type="PANTHER" id="PTHR19139">
    <property type="entry name" value="AQUAPORIN TRANSPORTER"/>
    <property type="match status" value="1"/>
</dbReference>
<dbReference type="PANTHER" id="PTHR19139:SF199">
    <property type="entry name" value="MIP17260P"/>
    <property type="match status" value="1"/>
</dbReference>
<dbReference type="Pfam" id="PF00230">
    <property type="entry name" value="MIP"/>
    <property type="match status" value="1"/>
</dbReference>
<dbReference type="PRINTS" id="PR00783">
    <property type="entry name" value="MINTRINSICP"/>
</dbReference>
<dbReference type="SUPFAM" id="SSF81338">
    <property type="entry name" value="Aquaporin-like"/>
    <property type="match status" value="1"/>
</dbReference>
<dbReference type="PROSITE" id="PS00221">
    <property type="entry name" value="MIP"/>
    <property type="match status" value="1"/>
</dbReference>
<keyword id="KW-0997">Cell inner membrane</keyword>
<keyword id="KW-1003">Cell membrane</keyword>
<keyword id="KW-0472">Membrane</keyword>
<keyword id="KW-1185">Reference proteome</keyword>
<keyword id="KW-0677">Repeat</keyword>
<keyword id="KW-0812">Transmembrane</keyword>
<keyword id="KW-1133">Transmembrane helix</keyword>
<keyword id="KW-0813">Transport</keyword>
<comment type="function">
    <text evidence="1">Channel that permits osmotically driven movement of water in both directions. It is involved in the osmoregulation and in the maintenance of cell turgor during volume expansion in rapidly growing cells. It mediates rapid entry or exit of water in response to abrupt changes in osmolarity.</text>
</comment>
<comment type="catalytic activity">
    <reaction evidence="1">
        <text>H2O(in) = H2O(out)</text>
        <dbReference type="Rhea" id="RHEA:29667"/>
        <dbReference type="ChEBI" id="CHEBI:15377"/>
    </reaction>
    <physiologicalReaction direction="left-to-right" evidence="1">
        <dbReference type="Rhea" id="RHEA:29668"/>
    </physiologicalReaction>
    <physiologicalReaction direction="right-to-left" evidence="1">
        <dbReference type="Rhea" id="RHEA:29669"/>
    </physiologicalReaction>
</comment>
<comment type="subunit">
    <text evidence="1">Homotetramer.</text>
</comment>
<comment type="subcellular location">
    <subcellularLocation>
        <location evidence="1">Cell inner membrane</location>
        <topology evidence="1">Multi-pass membrane protein</topology>
    </subcellularLocation>
</comment>
<comment type="domain">
    <text evidence="1">Aquaporins contain two tandem repeats each containing three membrane-spanning domains and a pore-forming loop with the signature motif Asn-Pro-Ala (NPA).</text>
</comment>
<comment type="similarity">
    <text evidence="1">Belongs to the MIP/aquaporin (TC 1.A.8) family.</text>
</comment>
<evidence type="ECO:0000255" key="1">
    <source>
        <dbReference type="HAMAP-Rule" id="MF_01146"/>
    </source>
</evidence>
<protein>
    <recommendedName>
        <fullName evidence="1">Aquaporin Z</fullName>
    </recommendedName>
</protein>
<proteinExistence type="inferred from homology"/>
<feature type="chain" id="PRO_0000063992" description="Aquaporin Z">
    <location>
        <begin position="1"/>
        <end position="248"/>
    </location>
</feature>
<feature type="transmembrane region" description="Helical" evidence="1">
    <location>
        <begin position="11"/>
        <end position="31"/>
    </location>
</feature>
<feature type="transmembrane region" description="Helical" evidence="1">
    <location>
        <begin position="36"/>
        <end position="56"/>
    </location>
</feature>
<feature type="transmembrane region" description="Helical" evidence="1">
    <location>
        <begin position="87"/>
        <end position="107"/>
    </location>
</feature>
<feature type="transmembrane region" description="Helical" evidence="1">
    <location>
        <begin position="132"/>
        <end position="152"/>
    </location>
</feature>
<feature type="transmembrane region" description="Helical" evidence="1">
    <location>
        <begin position="161"/>
        <end position="181"/>
    </location>
</feature>
<feature type="transmembrane region" description="Helical" evidence="1">
    <location>
        <begin position="203"/>
        <end position="223"/>
    </location>
</feature>
<feature type="short sequence motif" description="NPA 1" evidence="1">
    <location>
        <begin position="65"/>
        <end position="67"/>
    </location>
</feature>
<feature type="short sequence motif" description="NPA 2" evidence="1">
    <location>
        <begin position="187"/>
        <end position="189"/>
    </location>
</feature>
<feature type="site" description="Involved in tetramerization or stability of the tetramer" evidence="1">
    <location>
        <position position="22"/>
    </location>
</feature>
<feature type="site" description="Selectivity filter" evidence="1">
    <location>
        <position position="45"/>
    </location>
</feature>
<feature type="site" description="Selectivity filter" evidence="1">
    <location>
        <position position="175"/>
    </location>
</feature>
<feature type="site" description="Selectivity filter" evidence="1">
    <location>
        <position position="184"/>
    </location>
</feature>
<feature type="site" description="Selectivity filter" evidence="1">
    <location>
        <position position="190"/>
    </location>
</feature>
<reference key="1">
    <citation type="journal article" date="2003" name="DNA Res.">
        <title>Complete genome structure of Gloeobacter violaceus PCC 7421, a cyanobacterium that lacks thylakoids.</title>
        <authorList>
            <person name="Nakamura Y."/>
            <person name="Kaneko T."/>
            <person name="Sato S."/>
            <person name="Mimuro M."/>
            <person name="Miyashita H."/>
            <person name="Tsuchiya T."/>
            <person name="Sasamoto S."/>
            <person name="Watanabe A."/>
            <person name="Kawashima K."/>
            <person name="Kishida Y."/>
            <person name="Kiyokawa C."/>
            <person name="Kohara M."/>
            <person name="Matsumoto M."/>
            <person name="Matsuno A."/>
            <person name="Nakazaki N."/>
            <person name="Shimpo S."/>
            <person name="Takeuchi C."/>
            <person name="Yamada M."/>
            <person name="Tabata S."/>
        </authorList>
    </citation>
    <scope>NUCLEOTIDE SEQUENCE [LARGE SCALE GENOMIC DNA]</scope>
    <source>
        <strain>ATCC 29082 / PCC 7421</strain>
    </source>
</reference>
<accession>Q7NNP3</accession>
<sequence length="248" mass="25526">MSLVKRSVAEFIGTFWLVLGGCGAAVLAAAFPNLGIGFAGVSLAFGLTLLTMAFAIGHISGCHINPAVSIGLWAAKRFPATELLPYIAAQVLGGIAGAGVLYLIAGGKAGFSLSGGFASNGYGLHSPGGYTLLACLVCEVVMTFMFLMIILGSTDRRAPKGFAPIAIGLSLTLIHLISIPVTNTSVNPARSTGPALFVGDWAIAELWLFWLAPIVGAALAGLFYHAFLDEPGEETEGTPASAQLRTEA</sequence>
<organism>
    <name type="scientific">Gloeobacter violaceus (strain ATCC 29082 / PCC 7421)</name>
    <dbReference type="NCBI Taxonomy" id="251221"/>
    <lineage>
        <taxon>Bacteria</taxon>
        <taxon>Bacillati</taxon>
        <taxon>Cyanobacteriota</taxon>
        <taxon>Cyanophyceae</taxon>
        <taxon>Gloeobacterales</taxon>
        <taxon>Gloeobacteraceae</taxon>
        <taxon>Gloeobacter</taxon>
    </lineage>
</organism>
<name>AQPZ_GLOVI</name>
<gene>
    <name evidence="1" type="primary">aqpZ</name>
    <name type="ordered locus">gll0367</name>
</gene>